<dbReference type="EC" id="6.3.4.20" evidence="1"/>
<dbReference type="EMBL" id="AE016828">
    <property type="protein sequence ID" value="AAO91567.2"/>
    <property type="status" value="ALT_INIT"/>
    <property type="molecule type" value="Genomic_DNA"/>
</dbReference>
<dbReference type="RefSeq" id="NP_821053.2">
    <property type="nucleotide sequence ID" value="NC_002971.3"/>
</dbReference>
<dbReference type="RefSeq" id="WP_010958640.1">
    <property type="nucleotide sequence ID" value="NC_002971.4"/>
</dbReference>
<dbReference type="SMR" id="Q83A28"/>
<dbReference type="STRING" id="227377.CBU_2083"/>
<dbReference type="EnsemblBacteria" id="AAO91567">
    <property type="protein sequence ID" value="AAO91567"/>
    <property type="gene ID" value="CBU_2083"/>
</dbReference>
<dbReference type="GeneID" id="1209996"/>
<dbReference type="KEGG" id="cbu:CBU_2083"/>
<dbReference type="PATRIC" id="fig|227377.7.peg.2073"/>
<dbReference type="eggNOG" id="COG0603">
    <property type="taxonomic scope" value="Bacteria"/>
</dbReference>
<dbReference type="HOGENOM" id="CLU_081854_1_0_6"/>
<dbReference type="OrthoDB" id="9789567at2"/>
<dbReference type="UniPathway" id="UPA00391"/>
<dbReference type="Proteomes" id="UP000002671">
    <property type="component" value="Chromosome"/>
</dbReference>
<dbReference type="GO" id="GO:0005524">
    <property type="term" value="F:ATP binding"/>
    <property type="evidence" value="ECO:0007669"/>
    <property type="project" value="UniProtKB-UniRule"/>
</dbReference>
<dbReference type="GO" id="GO:0016879">
    <property type="term" value="F:ligase activity, forming carbon-nitrogen bonds"/>
    <property type="evidence" value="ECO:0007669"/>
    <property type="project" value="UniProtKB-UniRule"/>
</dbReference>
<dbReference type="GO" id="GO:0008270">
    <property type="term" value="F:zinc ion binding"/>
    <property type="evidence" value="ECO:0007669"/>
    <property type="project" value="UniProtKB-UniRule"/>
</dbReference>
<dbReference type="GO" id="GO:0008616">
    <property type="term" value="P:queuosine biosynthetic process"/>
    <property type="evidence" value="ECO:0007669"/>
    <property type="project" value="UniProtKB-UniRule"/>
</dbReference>
<dbReference type="CDD" id="cd01995">
    <property type="entry name" value="QueC-like"/>
    <property type="match status" value="1"/>
</dbReference>
<dbReference type="FunFam" id="3.40.50.620:FF:000131">
    <property type="entry name" value="7-cyano-7-deazaguanine synthase"/>
    <property type="match status" value="1"/>
</dbReference>
<dbReference type="Gene3D" id="3.40.50.620">
    <property type="entry name" value="HUPs"/>
    <property type="match status" value="1"/>
</dbReference>
<dbReference type="HAMAP" id="MF_01633">
    <property type="entry name" value="QueC"/>
    <property type="match status" value="1"/>
</dbReference>
<dbReference type="InterPro" id="IPR018317">
    <property type="entry name" value="QueC"/>
</dbReference>
<dbReference type="InterPro" id="IPR014729">
    <property type="entry name" value="Rossmann-like_a/b/a_fold"/>
</dbReference>
<dbReference type="NCBIfam" id="TIGR00364">
    <property type="entry name" value="7-cyano-7-deazaguanine synthase QueC"/>
    <property type="match status" value="1"/>
</dbReference>
<dbReference type="PANTHER" id="PTHR42914">
    <property type="entry name" value="7-CYANO-7-DEAZAGUANINE SYNTHASE"/>
    <property type="match status" value="1"/>
</dbReference>
<dbReference type="PANTHER" id="PTHR42914:SF1">
    <property type="entry name" value="7-CYANO-7-DEAZAGUANINE SYNTHASE"/>
    <property type="match status" value="1"/>
</dbReference>
<dbReference type="Pfam" id="PF06508">
    <property type="entry name" value="QueC"/>
    <property type="match status" value="1"/>
</dbReference>
<dbReference type="PIRSF" id="PIRSF006293">
    <property type="entry name" value="ExsB"/>
    <property type="match status" value="1"/>
</dbReference>
<dbReference type="SUPFAM" id="SSF52402">
    <property type="entry name" value="Adenine nucleotide alpha hydrolases-like"/>
    <property type="match status" value="1"/>
</dbReference>
<sequence>MKKAVILISGGLDSTTCLAVAKSKGFSCYALSFDYGQKHHSELVAAEKIAAHFNVVRYEVVTLSIGKLGGSALTDNSLDVPDYGGNESIPITYVPARNTIFLSIALGWAEILDAESILIGASAIDYSGYPDCRPEYIAAFQNLANLATKRGIEGHSIKIEAPLIHLSKAETIKLGYSLGVDYSMTVSCYRANEEGLACGYCDSCELRKKGFKEAEIKDPTQYITKV</sequence>
<reference key="1">
    <citation type="journal article" date="2003" name="Proc. Natl. Acad. Sci. U.S.A.">
        <title>Complete genome sequence of the Q-fever pathogen, Coxiella burnetii.</title>
        <authorList>
            <person name="Seshadri R."/>
            <person name="Paulsen I.T."/>
            <person name="Eisen J.A."/>
            <person name="Read T.D."/>
            <person name="Nelson K.E."/>
            <person name="Nelson W.C."/>
            <person name="Ward N.L."/>
            <person name="Tettelin H."/>
            <person name="Davidsen T.M."/>
            <person name="Beanan M.J."/>
            <person name="DeBoy R.T."/>
            <person name="Daugherty S.C."/>
            <person name="Brinkac L.M."/>
            <person name="Madupu R."/>
            <person name="Dodson R.J."/>
            <person name="Khouri H.M."/>
            <person name="Lee K.H."/>
            <person name="Carty H.A."/>
            <person name="Scanlan D."/>
            <person name="Heinzen R.A."/>
            <person name="Thompson H.A."/>
            <person name="Samuel J.E."/>
            <person name="Fraser C.M."/>
            <person name="Heidelberg J.F."/>
        </authorList>
    </citation>
    <scope>NUCLEOTIDE SEQUENCE [LARGE SCALE GENOMIC DNA]</scope>
    <source>
        <strain>RSA 493 / Nine Mile phase I</strain>
    </source>
</reference>
<protein>
    <recommendedName>
        <fullName evidence="1">7-cyano-7-deazaguanine synthase</fullName>
        <ecNumber evidence="1">6.3.4.20</ecNumber>
    </recommendedName>
    <alternativeName>
        <fullName evidence="1">7-cyano-7-carbaguanine synthase</fullName>
    </alternativeName>
    <alternativeName>
        <fullName evidence="1">PreQ(0) synthase</fullName>
    </alternativeName>
    <alternativeName>
        <fullName evidence="1">Queuosine biosynthesis protein QueC</fullName>
    </alternativeName>
</protein>
<keyword id="KW-0067">ATP-binding</keyword>
<keyword id="KW-0436">Ligase</keyword>
<keyword id="KW-0479">Metal-binding</keyword>
<keyword id="KW-0547">Nucleotide-binding</keyword>
<keyword id="KW-0671">Queuosine biosynthesis</keyword>
<keyword id="KW-1185">Reference proteome</keyword>
<keyword id="KW-0862">Zinc</keyword>
<organism>
    <name type="scientific">Coxiella burnetii (strain RSA 493 / Nine Mile phase I)</name>
    <dbReference type="NCBI Taxonomy" id="227377"/>
    <lineage>
        <taxon>Bacteria</taxon>
        <taxon>Pseudomonadati</taxon>
        <taxon>Pseudomonadota</taxon>
        <taxon>Gammaproteobacteria</taxon>
        <taxon>Legionellales</taxon>
        <taxon>Coxiellaceae</taxon>
        <taxon>Coxiella</taxon>
    </lineage>
</organism>
<name>QUEC_COXBU</name>
<accession>Q83A28</accession>
<feature type="chain" id="PRO_0000246833" description="7-cyano-7-deazaguanine synthase">
    <location>
        <begin position="1"/>
        <end position="226"/>
    </location>
</feature>
<feature type="binding site" evidence="1">
    <location>
        <begin position="8"/>
        <end position="18"/>
    </location>
    <ligand>
        <name>ATP</name>
        <dbReference type="ChEBI" id="CHEBI:30616"/>
    </ligand>
</feature>
<feature type="binding site" evidence="1">
    <location>
        <position position="188"/>
    </location>
    <ligand>
        <name>Zn(2+)</name>
        <dbReference type="ChEBI" id="CHEBI:29105"/>
    </ligand>
</feature>
<feature type="binding site" evidence="1">
    <location>
        <position position="198"/>
    </location>
    <ligand>
        <name>Zn(2+)</name>
        <dbReference type="ChEBI" id="CHEBI:29105"/>
    </ligand>
</feature>
<feature type="binding site" evidence="1">
    <location>
        <position position="201"/>
    </location>
    <ligand>
        <name>Zn(2+)</name>
        <dbReference type="ChEBI" id="CHEBI:29105"/>
    </ligand>
</feature>
<feature type="binding site" evidence="1">
    <location>
        <position position="204"/>
    </location>
    <ligand>
        <name>Zn(2+)</name>
        <dbReference type="ChEBI" id="CHEBI:29105"/>
    </ligand>
</feature>
<comment type="function">
    <text evidence="1">Catalyzes the ATP-dependent conversion of 7-carboxy-7-deazaguanine (CDG) to 7-cyano-7-deazaguanine (preQ(0)).</text>
</comment>
<comment type="catalytic activity">
    <reaction evidence="1">
        <text>7-carboxy-7-deazaguanine + NH4(+) + ATP = 7-cyano-7-deazaguanine + ADP + phosphate + H2O + H(+)</text>
        <dbReference type="Rhea" id="RHEA:27982"/>
        <dbReference type="ChEBI" id="CHEBI:15377"/>
        <dbReference type="ChEBI" id="CHEBI:15378"/>
        <dbReference type="ChEBI" id="CHEBI:28938"/>
        <dbReference type="ChEBI" id="CHEBI:30616"/>
        <dbReference type="ChEBI" id="CHEBI:43474"/>
        <dbReference type="ChEBI" id="CHEBI:45075"/>
        <dbReference type="ChEBI" id="CHEBI:61036"/>
        <dbReference type="ChEBI" id="CHEBI:456216"/>
        <dbReference type="EC" id="6.3.4.20"/>
    </reaction>
</comment>
<comment type="cofactor">
    <cofactor evidence="1">
        <name>Zn(2+)</name>
        <dbReference type="ChEBI" id="CHEBI:29105"/>
    </cofactor>
    <text evidence="1">Binds 1 zinc ion per subunit.</text>
</comment>
<comment type="pathway">
    <text evidence="1">Purine metabolism; 7-cyano-7-deazaguanine biosynthesis.</text>
</comment>
<comment type="similarity">
    <text evidence="1">Belongs to the QueC family.</text>
</comment>
<comment type="sequence caution" evidence="2">
    <conflict type="erroneous initiation">
        <sequence resource="EMBL-CDS" id="AAO91567"/>
    </conflict>
</comment>
<gene>
    <name evidence="1" type="primary">queC</name>
    <name type="ordered locus">CBU_2083</name>
</gene>
<evidence type="ECO:0000255" key="1">
    <source>
        <dbReference type="HAMAP-Rule" id="MF_01633"/>
    </source>
</evidence>
<evidence type="ECO:0000305" key="2"/>
<proteinExistence type="inferred from homology"/>